<gene>
    <name evidence="1" type="primary">trpB</name>
    <name type="ordered locus">BCA_1282</name>
</gene>
<reference key="1">
    <citation type="submission" date="2009-02" db="EMBL/GenBank/DDBJ databases">
        <title>Genome sequence of Bacillus cereus 03BB102.</title>
        <authorList>
            <person name="Dodson R.J."/>
            <person name="Jackson P."/>
            <person name="Munk A.C."/>
            <person name="Brettin T."/>
            <person name="Bruce D."/>
            <person name="Detter C."/>
            <person name="Tapia R."/>
            <person name="Han C."/>
            <person name="Sutton G."/>
            <person name="Sims D."/>
        </authorList>
    </citation>
    <scope>NUCLEOTIDE SEQUENCE [LARGE SCALE GENOMIC DNA]</scope>
    <source>
        <strain>03BB102</strain>
    </source>
</reference>
<name>TRPB_BACC3</name>
<evidence type="ECO:0000255" key="1">
    <source>
        <dbReference type="HAMAP-Rule" id="MF_00133"/>
    </source>
</evidence>
<protein>
    <recommendedName>
        <fullName evidence="1">Tryptophan synthase beta chain</fullName>
        <ecNumber evidence="1">4.2.1.20</ecNumber>
    </recommendedName>
</protein>
<organism>
    <name type="scientific">Bacillus cereus (strain 03BB102)</name>
    <dbReference type="NCBI Taxonomy" id="572264"/>
    <lineage>
        <taxon>Bacteria</taxon>
        <taxon>Bacillati</taxon>
        <taxon>Bacillota</taxon>
        <taxon>Bacilli</taxon>
        <taxon>Bacillales</taxon>
        <taxon>Bacillaceae</taxon>
        <taxon>Bacillus</taxon>
        <taxon>Bacillus cereus group</taxon>
    </lineage>
</organism>
<accession>C1ELF0</accession>
<dbReference type="EC" id="4.2.1.20" evidence="1"/>
<dbReference type="EMBL" id="CP001407">
    <property type="protein sequence ID" value="ACO26770.1"/>
    <property type="molecule type" value="Genomic_DNA"/>
</dbReference>
<dbReference type="RefSeq" id="WP_001105008.1">
    <property type="nucleotide sequence ID" value="NZ_CP009318.1"/>
</dbReference>
<dbReference type="SMR" id="C1ELF0"/>
<dbReference type="KEGG" id="bcx:BCA_1282"/>
<dbReference type="PATRIC" id="fig|572264.18.peg.1233"/>
<dbReference type="UniPathway" id="UPA00035">
    <property type="reaction ID" value="UER00044"/>
</dbReference>
<dbReference type="Proteomes" id="UP000002210">
    <property type="component" value="Chromosome"/>
</dbReference>
<dbReference type="GO" id="GO:0005737">
    <property type="term" value="C:cytoplasm"/>
    <property type="evidence" value="ECO:0007669"/>
    <property type="project" value="TreeGrafter"/>
</dbReference>
<dbReference type="GO" id="GO:0004834">
    <property type="term" value="F:tryptophan synthase activity"/>
    <property type="evidence" value="ECO:0007669"/>
    <property type="project" value="UniProtKB-UniRule"/>
</dbReference>
<dbReference type="CDD" id="cd06446">
    <property type="entry name" value="Trp-synth_B"/>
    <property type="match status" value="1"/>
</dbReference>
<dbReference type="FunFam" id="3.40.50.1100:FF:000001">
    <property type="entry name" value="Tryptophan synthase beta chain"/>
    <property type="match status" value="1"/>
</dbReference>
<dbReference type="FunFam" id="3.40.50.1100:FF:000004">
    <property type="entry name" value="Tryptophan synthase beta chain"/>
    <property type="match status" value="1"/>
</dbReference>
<dbReference type="Gene3D" id="3.40.50.1100">
    <property type="match status" value="2"/>
</dbReference>
<dbReference type="HAMAP" id="MF_00133">
    <property type="entry name" value="Trp_synth_beta"/>
    <property type="match status" value="1"/>
</dbReference>
<dbReference type="InterPro" id="IPR006653">
    <property type="entry name" value="Trp_synth_b_CS"/>
</dbReference>
<dbReference type="InterPro" id="IPR006654">
    <property type="entry name" value="Trp_synth_beta"/>
</dbReference>
<dbReference type="InterPro" id="IPR023026">
    <property type="entry name" value="Trp_synth_beta/beta-like"/>
</dbReference>
<dbReference type="InterPro" id="IPR001926">
    <property type="entry name" value="TrpB-like_PALP"/>
</dbReference>
<dbReference type="InterPro" id="IPR036052">
    <property type="entry name" value="TrpB-like_PALP_sf"/>
</dbReference>
<dbReference type="NCBIfam" id="TIGR00263">
    <property type="entry name" value="trpB"/>
    <property type="match status" value="1"/>
</dbReference>
<dbReference type="PANTHER" id="PTHR48077:SF3">
    <property type="entry name" value="TRYPTOPHAN SYNTHASE"/>
    <property type="match status" value="1"/>
</dbReference>
<dbReference type="PANTHER" id="PTHR48077">
    <property type="entry name" value="TRYPTOPHAN SYNTHASE-RELATED"/>
    <property type="match status" value="1"/>
</dbReference>
<dbReference type="Pfam" id="PF00291">
    <property type="entry name" value="PALP"/>
    <property type="match status" value="1"/>
</dbReference>
<dbReference type="PIRSF" id="PIRSF001413">
    <property type="entry name" value="Trp_syn_beta"/>
    <property type="match status" value="1"/>
</dbReference>
<dbReference type="SUPFAM" id="SSF53686">
    <property type="entry name" value="Tryptophan synthase beta subunit-like PLP-dependent enzymes"/>
    <property type="match status" value="1"/>
</dbReference>
<dbReference type="PROSITE" id="PS00168">
    <property type="entry name" value="TRP_SYNTHASE_BETA"/>
    <property type="match status" value="1"/>
</dbReference>
<sequence length="397" mass="43634">MNYAYPDEKGHYGIYGGRYVPETLMQSVLELEEAYKEAMEDEAFQKELNHYLNTYVGRETPLYFAENMTEYCGGAKIYLKREDLNHTGAHKINNTIGQALLAVRMGKKKVVAETGAGQHGVATATVCALLGLECVIFMGEEDVRRQKLNVFRMELLGAKVESVAAGSGTLKDAVNEALRYWVSHVHDTHYIMGSVLGPHPFPQIVRDFQSVIGNETKKQYEELEGKLPEAVVACIGGGSNAMGMFYPFVHDEEVALYGVEAAGKGVHTEKHAATLTKGSVGVLHGSMMYLLQNEEGQIQEAHSISAGLDYPGVGPEHSLLKDIGRVSYHSITDDEALEAFQLLTKKEGIIPALESSHAVAYALKLAPQMKEDEGLVICLSGRGDKDVESIKRYMEEV</sequence>
<keyword id="KW-0028">Amino-acid biosynthesis</keyword>
<keyword id="KW-0057">Aromatic amino acid biosynthesis</keyword>
<keyword id="KW-0456">Lyase</keyword>
<keyword id="KW-0663">Pyridoxal phosphate</keyword>
<keyword id="KW-0822">Tryptophan biosynthesis</keyword>
<proteinExistence type="inferred from homology"/>
<feature type="chain" id="PRO_1000198739" description="Tryptophan synthase beta chain">
    <location>
        <begin position="1"/>
        <end position="397"/>
    </location>
</feature>
<feature type="modified residue" description="N6-(pyridoxal phosphate)lysine" evidence="1">
    <location>
        <position position="91"/>
    </location>
</feature>
<comment type="function">
    <text evidence="1">The beta subunit is responsible for the synthesis of L-tryptophan from indole and L-serine.</text>
</comment>
<comment type="catalytic activity">
    <reaction evidence="1">
        <text>(1S,2R)-1-C-(indol-3-yl)glycerol 3-phosphate + L-serine = D-glyceraldehyde 3-phosphate + L-tryptophan + H2O</text>
        <dbReference type="Rhea" id="RHEA:10532"/>
        <dbReference type="ChEBI" id="CHEBI:15377"/>
        <dbReference type="ChEBI" id="CHEBI:33384"/>
        <dbReference type="ChEBI" id="CHEBI:57912"/>
        <dbReference type="ChEBI" id="CHEBI:58866"/>
        <dbReference type="ChEBI" id="CHEBI:59776"/>
        <dbReference type="EC" id="4.2.1.20"/>
    </reaction>
</comment>
<comment type="cofactor">
    <cofactor evidence="1">
        <name>pyridoxal 5'-phosphate</name>
        <dbReference type="ChEBI" id="CHEBI:597326"/>
    </cofactor>
</comment>
<comment type="pathway">
    <text evidence="1">Amino-acid biosynthesis; L-tryptophan biosynthesis; L-tryptophan from chorismate: step 5/5.</text>
</comment>
<comment type="subunit">
    <text evidence="1">Tetramer of two alpha and two beta chains.</text>
</comment>
<comment type="similarity">
    <text evidence="1">Belongs to the TrpB family.</text>
</comment>